<sequence length="91" mass="10297">MKRVRAHLRIYGRVQGVGFRWSMSREARKLGVHGWVRNLPDGTVEAVIEGDPERVEALIGWAHQGPPLARVTRVEVKWEEPEGLEGFKVVG</sequence>
<reference key="1">
    <citation type="journal article" date="2005" name="Genome Res.">
        <title>Complete genome sequence of the hyperthermophilic archaeon Thermococcus kodakaraensis KOD1 and comparison with Pyrococcus genomes.</title>
        <authorList>
            <person name="Fukui T."/>
            <person name="Atomi H."/>
            <person name="Kanai T."/>
            <person name="Matsumi R."/>
            <person name="Fujiwara S."/>
            <person name="Imanaka T."/>
        </authorList>
    </citation>
    <scope>NUCLEOTIDE SEQUENCE [LARGE SCALE GENOMIC DNA]</scope>
    <source>
        <strain>ATCC BAA-918 / JCM 12380 / KOD1</strain>
    </source>
</reference>
<comment type="catalytic activity">
    <reaction>
        <text>an acyl phosphate + H2O = a carboxylate + phosphate + H(+)</text>
        <dbReference type="Rhea" id="RHEA:14965"/>
        <dbReference type="ChEBI" id="CHEBI:15377"/>
        <dbReference type="ChEBI" id="CHEBI:15378"/>
        <dbReference type="ChEBI" id="CHEBI:29067"/>
        <dbReference type="ChEBI" id="CHEBI:43474"/>
        <dbReference type="ChEBI" id="CHEBI:59918"/>
        <dbReference type="EC" id="3.6.1.7"/>
    </reaction>
</comment>
<comment type="similarity">
    <text evidence="2">Belongs to the acylphosphatase family.</text>
</comment>
<proteinExistence type="inferred from homology"/>
<accession>Q5JDG7</accession>
<evidence type="ECO:0000255" key="1">
    <source>
        <dbReference type="PROSITE-ProRule" id="PRU00520"/>
    </source>
</evidence>
<evidence type="ECO:0000305" key="2"/>
<dbReference type="EC" id="3.6.1.7"/>
<dbReference type="EMBL" id="AP006878">
    <property type="protein sequence ID" value="BAD86220.1"/>
    <property type="molecule type" value="Genomic_DNA"/>
</dbReference>
<dbReference type="RefSeq" id="WP_011250981.1">
    <property type="nucleotide sequence ID" value="NC_006624.1"/>
</dbReference>
<dbReference type="SMR" id="Q5JDG7"/>
<dbReference type="STRING" id="69014.TK2031"/>
<dbReference type="EnsemblBacteria" id="BAD86220">
    <property type="protein sequence ID" value="BAD86220"/>
    <property type="gene ID" value="TK2031"/>
</dbReference>
<dbReference type="GeneID" id="78448566"/>
<dbReference type="KEGG" id="tko:TK2031"/>
<dbReference type="PATRIC" id="fig|69014.16.peg.1985"/>
<dbReference type="eggNOG" id="arCOG01674">
    <property type="taxonomic scope" value="Archaea"/>
</dbReference>
<dbReference type="HOGENOM" id="CLU_141932_3_2_2"/>
<dbReference type="InParanoid" id="Q5JDG7"/>
<dbReference type="OrthoDB" id="6643at2157"/>
<dbReference type="PhylomeDB" id="Q5JDG7"/>
<dbReference type="Proteomes" id="UP000000536">
    <property type="component" value="Chromosome"/>
</dbReference>
<dbReference type="GO" id="GO:0003998">
    <property type="term" value="F:acylphosphatase activity"/>
    <property type="evidence" value="ECO:0000318"/>
    <property type="project" value="GO_Central"/>
</dbReference>
<dbReference type="FunFam" id="3.30.70.100:FF:000012">
    <property type="entry name" value="Acylphosphatase"/>
    <property type="match status" value="1"/>
</dbReference>
<dbReference type="Gene3D" id="3.30.70.100">
    <property type="match status" value="1"/>
</dbReference>
<dbReference type="InterPro" id="IPR020456">
    <property type="entry name" value="Acylphosphatase"/>
</dbReference>
<dbReference type="InterPro" id="IPR001792">
    <property type="entry name" value="Acylphosphatase-like_dom"/>
</dbReference>
<dbReference type="InterPro" id="IPR036046">
    <property type="entry name" value="Acylphosphatase-like_dom_sf"/>
</dbReference>
<dbReference type="InterPro" id="IPR017968">
    <property type="entry name" value="Acylphosphatase_CS"/>
</dbReference>
<dbReference type="NCBIfam" id="NF011010">
    <property type="entry name" value="PRK14436.1"/>
    <property type="match status" value="1"/>
</dbReference>
<dbReference type="PANTHER" id="PTHR47268">
    <property type="entry name" value="ACYLPHOSPHATASE"/>
    <property type="match status" value="1"/>
</dbReference>
<dbReference type="PANTHER" id="PTHR47268:SF4">
    <property type="entry name" value="ACYLPHOSPHATASE"/>
    <property type="match status" value="1"/>
</dbReference>
<dbReference type="Pfam" id="PF00708">
    <property type="entry name" value="Acylphosphatase"/>
    <property type="match status" value="1"/>
</dbReference>
<dbReference type="PRINTS" id="PR00112">
    <property type="entry name" value="ACYLPHPHTASE"/>
</dbReference>
<dbReference type="SUPFAM" id="SSF54975">
    <property type="entry name" value="Acylphosphatase/BLUF domain-like"/>
    <property type="match status" value="1"/>
</dbReference>
<dbReference type="PROSITE" id="PS00150">
    <property type="entry name" value="ACYLPHOSPHATASE_1"/>
    <property type="match status" value="1"/>
</dbReference>
<dbReference type="PROSITE" id="PS00151">
    <property type="entry name" value="ACYLPHOSPHATASE_2"/>
    <property type="match status" value="1"/>
</dbReference>
<dbReference type="PROSITE" id="PS51160">
    <property type="entry name" value="ACYLPHOSPHATASE_3"/>
    <property type="match status" value="1"/>
</dbReference>
<name>ACYP_THEKO</name>
<keyword id="KW-0378">Hydrolase</keyword>
<keyword id="KW-1185">Reference proteome</keyword>
<feature type="chain" id="PRO_0000158561" description="Acylphosphatase">
    <location>
        <begin position="1"/>
        <end position="91"/>
    </location>
</feature>
<feature type="domain" description="Acylphosphatase-like" evidence="1">
    <location>
        <begin position="5"/>
        <end position="91"/>
    </location>
</feature>
<feature type="active site" evidence="1">
    <location>
        <position position="20"/>
    </location>
</feature>
<feature type="active site" evidence="1">
    <location>
        <position position="38"/>
    </location>
</feature>
<organism>
    <name type="scientific">Thermococcus kodakarensis (strain ATCC BAA-918 / JCM 12380 / KOD1)</name>
    <name type="common">Pyrococcus kodakaraensis (strain KOD1)</name>
    <dbReference type="NCBI Taxonomy" id="69014"/>
    <lineage>
        <taxon>Archaea</taxon>
        <taxon>Methanobacteriati</taxon>
        <taxon>Methanobacteriota</taxon>
        <taxon>Thermococci</taxon>
        <taxon>Thermococcales</taxon>
        <taxon>Thermococcaceae</taxon>
        <taxon>Thermococcus</taxon>
    </lineage>
</organism>
<protein>
    <recommendedName>
        <fullName>Acylphosphatase</fullName>
        <ecNumber>3.6.1.7</ecNumber>
    </recommendedName>
    <alternativeName>
        <fullName>Acylphosphate phosphohydrolase</fullName>
    </alternativeName>
</protein>
<gene>
    <name type="primary">acyP</name>
    <name type="ordered locus">TK2031</name>
</gene>